<sequence>MESLPVFPNKFKAALAAKQVQIGCWSALSNPISTEVLGLAGFDWLVLDGEHAPNDISTFIPQLMALKGSASAPVVRVPTNEPVIIKRLLDIGFYNFLIPFVETKEEAEQAVASTRYPPEGIRGVSVSHRANMFGTVADYFAQSNKNITILVQIESQQGVDNVDAIAATEGVDCIFVGPSDLAAALGHLGNASHPDVQKAIQHIFNRASAHGKPSGILAPVEADARRYLEWGATFVAVGSDLGVFRSATQKLADTFKK</sequence>
<reference key="1">
    <citation type="submission" date="2008-05" db="EMBL/GenBank/DDBJ databases">
        <title>Complete sequence of Shigella boydii serotype 18 strain BS512.</title>
        <authorList>
            <person name="Rasko D.A."/>
            <person name="Rosovitz M."/>
            <person name="Maurelli A.T."/>
            <person name="Myers G."/>
            <person name="Seshadri R."/>
            <person name="Cer R."/>
            <person name="Jiang L."/>
            <person name="Ravel J."/>
            <person name="Sebastian Y."/>
        </authorList>
    </citation>
    <scope>NUCLEOTIDE SEQUENCE [LARGE SCALE GENOMIC DNA]</scope>
    <source>
        <strain>CDC 3083-94 / BS512</strain>
    </source>
</reference>
<comment type="function">
    <text evidence="1">Catalyzes the reversible retro-aldol cleavage of both 5-keto-4-deoxy-D-glucarate and 2-keto-3-deoxy-D-glucarate to pyruvate and tartronic semialdehyde.</text>
</comment>
<comment type="catalytic activity">
    <reaction evidence="1">
        <text>5-dehydro-4-deoxy-D-glucarate = 2-hydroxy-3-oxopropanoate + pyruvate</text>
        <dbReference type="Rhea" id="RHEA:27726"/>
        <dbReference type="ChEBI" id="CHEBI:15361"/>
        <dbReference type="ChEBI" id="CHEBI:42819"/>
        <dbReference type="ChEBI" id="CHEBI:57978"/>
    </reaction>
</comment>
<comment type="catalytic activity">
    <reaction evidence="1">
        <text>2-dehydro-3-deoxy-D-glucarate = 2-hydroxy-3-oxopropanoate + pyruvate</text>
        <dbReference type="Rhea" id="RHEA:10268"/>
        <dbReference type="ChEBI" id="CHEBI:15361"/>
        <dbReference type="ChEBI" id="CHEBI:57978"/>
        <dbReference type="ChEBI" id="CHEBI:58098"/>
        <dbReference type="EC" id="4.1.2.20"/>
    </reaction>
</comment>
<comment type="cofactor">
    <cofactor evidence="1">
        <name>Mg(2+)</name>
        <dbReference type="ChEBI" id="CHEBI:18420"/>
    </cofactor>
    <text evidence="1">Binds 1 Mg(2+) ion per subunit.</text>
</comment>
<comment type="pathway">
    <text evidence="1">Carbohydrate acid metabolism; galactarate degradation; D-glycerate from galactarate: step 2/3.</text>
</comment>
<comment type="subunit">
    <text evidence="1">Homohexamer; trimer of dimers.</text>
</comment>
<comment type="similarity">
    <text evidence="1">Belongs to the HpcH/HpaI aldolase family. KDGluc aldolase subfamily.</text>
</comment>
<keyword id="KW-0456">Lyase</keyword>
<keyword id="KW-0460">Magnesium</keyword>
<keyword id="KW-0479">Metal-binding</keyword>
<keyword id="KW-1185">Reference proteome</keyword>
<gene>
    <name evidence="1" type="primary">garL</name>
    <name type="ordered locus">SbBS512_E3232</name>
</gene>
<evidence type="ECO:0000255" key="1">
    <source>
        <dbReference type="HAMAP-Rule" id="MF_01291"/>
    </source>
</evidence>
<accession>B2U092</accession>
<feature type="chain" id="PRO_0000353159" description="5-keto-4-deoxy-D-glucarate aldolase">
    <location>
        <begin position="1"/>
        <end position="257"/>
    </location>
</feature>
<feature type="active site" description="Proton acceptor" evidence="1">
    <location>
        <position position="51"/>
    </location>
</feature>
<feature type="binding site" evidence="1">
    <location>
        <position position="152"/>
    </location>
    <ligand>
        <name>substrate</name>
    </ligand>
</feature>
<feature type="binding site" evidence="1">
    <location>
        <position position="154"/>
    </location>
    <ligand>
        <name>Mg(2+)</name>
        <dbReference type="ChEBI" id="CHEBI:18420"/>
    </ligand>
</feature>
<feature type="binding site" evidence="1">
    <location>
        <position position="179"/>
    </location>
    <ligand>
        <name>substrate</name>
    </ligand>
</feature>
<feature type="binding site" evidence="1">
    <location>
        <position position="180"/>
    </location>
    <ligand>
        <name>Mg(2+)</name>
        <dbReference type="ChEBI" id="CHEBI:18420"/>
    </ligand>
</feature>
<feature type="binding site" evidence="1">
    <location>
        <position position="180"/>
    </location>
    <ligand>
        <name>substrate</name>
    </ligand>
</feature>
<feature type="site" description="Transition state stabilizer" evidence="1">
    <location>
        <position position="76"/>
    </location>
</feature>
<feature type="site" description="Increases basicity of active site His" evidence="1">
    <location>
        <position position="90"/>
    </location>
</feature>
<protein>
    <recommendedName>
        <fullName evidence="1">5-keto-4-deoxy-D-glucarate aldolase</fullName>
        <shortName evidence="1">KDGluc aldolase</shortName>
        <shortName evidence="1">KDGlucA</shortName>
        <ecNumber evidence="1">4.1.2.20</ecNumber>
    </recommendedName>
    <alternativeName>
        <fullName evidence="1">2-dehydro-3-deoxy-D-glucarate aldolase</fullName>
    </alternativeName>
    <alternativeName>
        <fullName evidence="1">2-keto-3-deoxy-D-glucarate aldolase</fullName>
    </alternativeName>
    <alternativeName>
        <fullName evidence="1">5-dehydro-4-deoxy-D-glucarate aldolase</fullName>
    </alternativeName>
    <alternativeName>
        <fullName evidence="1">Alpha-keto-beta-deoxy-D-glucarate aldolase</fullName>
    </alternativeName>
</protein>
<dbReference type="EC" id="4.1.2.20" evidence="1"/>
<dbReference type="EMBL" id="CP001063">
    <property type="protein sequence ID" value="ACD09158.1"/>
    <property type="molecule type" value="Genomic_DNA"/>
</dbReference>
<dbReference type="RefSeq" id="WP_000445064.1">
    <property type="nucleotide sequence ID" value="NC_010658.1"/>
</dbReference>
<dbReference type="SMR" id="B2U092"/>
<dbReference type="STRING" id="344609.SbBS512_E3232"/>
<dbReference type="KEGG" id="sbc:SbBS512_E3232"/>
<dbReference type="HOGENOM" id="CLU_059964_1_0_6"/>
<dbReference type="UniPathway" id="UPA00565">
    <property type="reaction ID" value="UER00630"/>
</dbReference>
<dbReference type="Proteomes" id="UP000001030">
    <property type="component" value="Chromosome"/>
</dbReference>
<dbReference type="GO" id="GO:0005737">
    <property type="term" value="C:cytoplasm"/>
    <property type="evidence" value="ECO:0007669"/>
    <property type="project" value="TreeGrafter"/>
</dbReference>
<dbReference type="GO" id="GO:0008672">
    <property type="term" value="F:2-dehydro-3-deoxyglucarate aldolase activity"/>
    <property type="evidence" value="ECO:0007669"/>
    <property type="project" value="UniProtKB-UniRule"/>
</dbReference>
<dbReference type="GO" id="GO:0000287">
    <property type="term" value="F:magnesium ion binding"/>
    <property type="evidence" value="ECO:0007669"/>
    <property type="project" value="UniProtKB-UniRule"/>
</dbReference>
<dbReference type="GO" id="GO:0042838">
    <property type="term" value="P:D-glucarate catabolic process"/>
    <property type="evidence" value="ECO:0007669"/>
    <property type="project" value="UniProtKB-UniRule"/>
</dbReference>
<dbReference type="GO" id="GO:0046392">
    <property type="term" value="P:galactarate catabolic process"/>
    <property type="evidence" value="ECO:0007669"/>
    <property type="project" value="UniProtKB-UniRule"/>
</dbReference>
<dbReference type="FunFam" id="3.20.20.60:FF:000004">
    <property type="entry name" value="5-keto-4-deoxy-D-glucarate aldolase"/>
    <property type="match status" value="1"/>
</dbReference>
<dbReference type="Gene3D" id="3.20.20.60">
    <property type="entry name" value="Phosphoenolpyruvate-binding domains"/>
    <property type="match status" value="1"/>
</dbReference>
<dbReference type="HAMAP" id="MF_01291">
    <property type="entry name" value="KDGluc_aldolase"/>
    <property type="match status" value="1"/>
</dbReference>
<dbReference type="InterPro" id="IPR005000">
    <property type="entry name" value="Aldolase/citrate-lyase_domain"/>
</dbReference>
<dbReference type="InterPro" id="IPR017648">
    <property type="entry name" value="GarL"/>
</dbReference>
<dbReference type="InterPro" id="IPR050251">
    <property type="entry name" value="HpcH-HpaI_aldolase"/>
</dbReference>
<dbReference type="InterPro" id="IPR015813">
    <property type="entry name" value="Pyrv/PenolPyrv_kinase-like_dom"/>
</dbReference>
<dbReference type="InterPro" id="IPR040442">
    <property type="entry name" value="Pyrv_kinase-like_dom_sf"/>
</dbReference>
<dbReference type="NCBIfam" id="TIGR03239">
    <property type="entry name" value="GarL"/>
    <property type="match status" value="1"/>
</dbReference>
<dbReference type="NCBIfam" id="NF007849">
    <property type="entry name" value="PRK10558.1"/>
    <property type="match status" value="1"/>
</dbReference>
<dbReference type="PANTHER" id="PTHR30502">
    <property type="entry name" value="2-KETO-3-DEOXY-L-RHAMNONATE ALDOLASE"/>
    <property type="match status" value="1"/>
</dbReference>
<dbReference type="PANTHER" id="PTHR30502:SF4">
    <property type="entry name" value="5-KETO-4-DEOXY-D-GLUCARATE ALDOLASE"/>
    <property type="match status" value="1"/>
</dbReference>
<dbReference type="Pfam" id="PF03328">
    <property type="entry name" value="HpcH_HpaI"/>
    <property type="match status" value="1"/>
</dbReference>
<dbReference type="SUPFAM" id="SSF51621">
    <property type="entry name" value="Phosphoenolpyruvate/pyruvate domain"/>
    <property type="match status" value="1"/>
</dbReference>
<name>GARL_SHIB3</name>
<organism>
    <name type="scientific">Shigella boydii serotype 18 (strain CDC 3083-94 / BS512)</name>
    <dbReference type="NCBI Taxonomy" id="344609"/>
    <lineage>
        <taxon>Bacteria</taxon>
        <taxon>Pseudomonadati</taxon>
        <taxon>Pseudomonadota</taxon>
        <taxon>Gammaproteobacteria</taxon>
        <taxon>Enterobacterales</taxon>
        <taxon>Enterobacteriaceae</taxon>
        <taxon>Shigella</taxon>
    </lineage>
</organism>
<proteinExistence type="inferred from homology"/>